<proteinExistence type="inferred from homology"/>
<gene>
    <name type="primary">psaI</name>
</gene>
<comment type="function">
    <text evidence="1">May help in the organization of the PsaL subunit.</text>
</comment>
<comment type="subcellular location">
    <subcellularLocation>
        <location evidence="1">Plastid</location>
        <location evidence="1">Chloroplast thylakoid membrane</location>
        <topology evidence="1">Single-pass membrane protein</topology>
    </subcellularLocation>
</comment>
<comment type="similarity">
    <text evidence="3">Belongs to the PsaI family.</text>
</comment>
<reference key="1">
    <citation type="journal article" date="1994" name="Proc. Natl. Acad. Sci. U.S.A.">
        <title>Loss of all ndh genes as determined by sequencing the entire chloroplast genome of the black pine Pinus thunbergii.</title>
        <authorList>
            <person name="Wakasugi T."/>
            <person name="Tsudzuki J."/>
            <person name="Ito S."/>
            <person name="Nakashima K."/>
            <person name="Tsudzuki T."/>
            <person name="Sugiura M."/>
        </authorList>
    </citation>
    <scope>NUCLEOTIDE SEQUENCE [LARGE SCALE GENOMIC DNA]</scope>
</reference>
<dbReference type="EMBL" id="D17510">
    <property type="protein sequence ID" value="BAA04364.1"/>
    <property type="molecule type" value="Genomic_DNA"/>
</dbReference>
<dbReference type="PIR" id="T07486">
    <property type="entry name" value="T07486"/>
</dbReference>
<dbReference type="RefSeq" id="NP_042407.1">
    <property type="nucleotide sequence ID" value="NC_001631.1"/>
</dbReference>
<dbReference type="SMR" id="P52768"/>
<dbReference type="GeneID" id="809012"/>
<dbReference type="GO" id="GO:0009535">
    <property type="term" value="C:chloroplast thylakoid membrane"/>
    <property type="evidence" value="ECO:0007669"/>
    <property type="project" value="UniProtKB-SubCell"/>
</dbReference>
<dbReference type="GO" id="GO:0009522">
    <property type="term" value="C:photosystem I"/>
    <property type="evidence" value="ECO:0007669"/>
    <property type="project" value="UniProtKB-KW"/>
</dbReference>
<dbReference type="GO" id="GO:0015979">
    <property type="term" value="P:photosynthesis"/>
    <property type="evidence" value="ECO:0007669"/>
    <property type="project" value="UniProtKB-UniRule"/>
</dbReference>
<dbReference type="HAMAP" id="MF_00431">
    <property type="entry name" value="PSI_PsaI"/>
    <property type="match status" value="1"/>
</dbReference>
<dbReference type="InterPro" id="IPR001302">
    <property type="entry name" value="PSI_PsaI"/>
</dbReference>
<dbReference type="InterPro" id="IPR036357">
    <property type="entry name" value="PSI_PsaI_sf"/>
</dbReference>
<dbReference type="NCBIfam" id="TIGR03052">
    <property type="entry name" value="PS_I_psaI"/>
    <property type="match status" value="1"/>
</dbReference>
<dbReference type="Pfam" id="PF00796">
    <property type="entry name" value="PSI_8"/>
    <property type="match status" value="1"/>
</dbReference>
<dbReference type="SUPFAM" id="SSF81540">
    <property type="entry name" value="Subunit VIII of photosystem I reaction centre, PsaI"/>
    <property type="match status" value="1"/>
</dbReference>
<protein>
    <recommendedName>
        <fullName>Photosystem I reaction center subunit VIII</fullName>
        <shortName>PSI-I</shortName>
    </recommendedName>
</protein>
<name>PSAI_PINTH</name>
<organism>
    <name type="scientific">Pinus thunbergii</name>
    <name type="common">Japanese black pine</name>
    <name type="synonym">Pinus thunbergiana</name>
    <dbReference type="NCBI Taxonomy" id="3350"/>
    <lineage>
        <taxon>Eukaryota</taxon>
        <taxon>Viridiplantae</taxon>
        <taxon>Streptophyta</taxon>
        <taxon>Embryophyta</taxon>
        <taxon>Tracheophyta</taxon>
        <taxon>Spermatophyta</taxon>
        <taxon>Pinopsida</taxon>
        <taxon>Pinidae</taxon>
        <taxon>Conifers I</taxon>
        <taxon>Pinales</taxon>
        <taxon>Pinaceae</taxon>
        <taxon>Pinus</taxon>
        <taxon>Pinus subgen. Pinus</taxon>
    </lineage>
</organism>
<geneLocation type="chloroplast"/>
<feature type="chain" id="PRO_0000194671" description="Photosystem I reaction center subunit VIII">
    <location>
        <begin position="1"/>
        <end position="52"/>
    </location>
</feature>
<feature type="transmembrane region" description="Helical" evidence="2">
    <location>
        <begin position="21"/>
        <end position="41"/>
    </location>
</feature>
<accession>P52768</accession>
<sequence length="52" mass="5711">MIIPNLLPNLLSNLLSNLLPILPSILVPLVGLLLPAITMVLSHLYIQKDEIL</sequence>
<keyword id="KW-0150">Chloroplast</keyword>
<keyword id="KW-0472">Membrane</keyword>
<keyword id="KW-0602">Photosynthesis</keyword>
<keyword id="KW-0603">Photosystem I</keyword>
<keyword id="KW-0934">Plastid</keyword>
<keyword id="KW-0793">Thylakoid</keyword>
<keyword id="KW-0812">Transmembrane</keyword>
<keyword id="KW-1133">Transmembrane helix</keyword>
<evidence type="ECO:0000250" key="1"/>
<evidence type="ECO:0000255" key="2"/>
<evidence type="ECO:0000305" key="3"/>